<protein>
    <recommendedName>
        <fullName>Serine-aspartate repeat-containing protein C</fullName>
    </recommendedName>
</protein>
<evidence type="ECO:0000250" key="1">
    <source>
        <dbReference type="UniProtKB" id="O86487"/>
    </source>
</evidence>
<evidence type="ECO:0000255" key="2"/>
<evidence type="ECO:0000255" key="3">
    <source>
        <dbReference type="PROSITE-ProRule" id="PRU00477"/>
    </source>
</evidence>
<evidence type="ECO:0000256" key="4">
    <source>
        <dbReference type="SAM" id="MobiDB-lite"/>
    </source>
</evidence>
<evidence type="ECO:0000305" key="5"/>
<dbReference type="EMBL" id="BA000017">
    <property type="protein sequence ID" value="BAB56723.1"/>
    <property type="molecule type" value="Genomic_DNA"/>
</dbReference>
<dbReference type="RefSeq" id="WP_001060462.1">
    <property type="nucleotide sequence ID" value="NC_002758.2"/>
</dbReference>
<dbReference type="SMR" id="Q99W48"/>
<dbReference type="KEGG" id="sav:SAV0561"/>
<dbReference type="HOGENOM" id="CLU_004137_1_2_9"/>
<dbReference type="PhylomeDB" id="Q99W48"/>
<dbReference type="PRO" id="PR:Q99W48"/>
<dbReference type="Proteomes" id="UP000002481">
    <property type="component" value="Chromosome"/>
</dbReference>
<dbReference type="GO" id="GO:0005576">
    <property type="term" value="C:extracellular region"/>
    <property type="evidence" value="ECO:0007669"/>
    <property type="project" value="UniProtKB-KW"/>
</dbReference>
<dbReference type="GO" id="GO:0007155">
    <property type="term" value="P:cell adhesion"/>
    <property type="evidence" value="ECO:0007669"/>
    <property type="project" value="InterPro"/>
</dbReference>
<dbReference type="Gene3D" id="2.60.40.1280">
    <property type="match status" value="1"/>
</dbReference>
<dbReference type="Gene3D" id="2.60.40.1290">
    <property type="match status" value="1"/>
</dbReference>
<dbReference type="Gene3D" id="2.60.40.10">
    <property type="entry name" value="Immunoglobulins"/>
    <property type="match status" value="2"/>
</dbReference>
<dbReference type="InterPro" id="IPR011266">
    <property type="entry name" value="Adhesin_Fg-bd_dom_2"/>
</dbReference>
<dbReference type="InterPro" id="IPR008966">
    <property type="entry name" value="Adhesion_dom_sf"/>
</dbReference>
<dbReference type="InterPro" id="IPR011252">
    <property type="entry name" value="Fibrogen-bd_dom1"/>
</dbReference>
<dbReference type="InterPro" id="IPR013783">
    <property type="entry name" value="Ig-like_fold"/>
</dbReference>
<dbReference type="InterPro" id="IPR019931">
    <property type="entry name" value="LPXTG_anchor"/>
</dbReference>
<dbReference type="InterPro" id="IPR050972">
    <property type="entry name" value="SDr-like"/>
</dbReference>
<dbReference type="InterPro" id="IPR033764">
    <property type="entry name" value="Sdr_B"/>
</dbReference>
<dbReference type="InterPro" id="IPR041171">
    <property type="entry name" value="SDR_Ig"/>
</dbReference>
<dbReference type="InterPro" id="IPR005877">
    <property type="entry name" value="YSIRK_signal_dom"/>
</dbReference>
<dbReference type="NCBIfam" id="TIGR01167">
    <property type="entry name" value="LPXTG_anchor"/>
    <property type="match status" value="1"/>
</dbReference>
<dbReference type="NCBIfam" id="NF000535">
    <property type="entry name" value="MSCRAMM_SdrC"/>
    <property type="match status" value="1"/>
</dbReference>
<dbReference type="NCBIfam" id="TIGR01168">
    <property type="entry name" value="YSIRK_signal"/>
    <property type="match status" value="1"/>
</dbReference>
<dbReference type="PANTHER" id="PTHR34403">
    <property type="entry name" value="TOL-PAL SYSTEM PROTEIN TOLA"/>
    <property type="match status" value="1"/>
</dbReference>
<dbReference type="PANTHER" id="PTHR34403:SF8">
    <property type="entry name" value="TOL-PAL SYSTEM PROTEIN TOLA"/>
    <property type="match status" value="1"/>
</dbReference>
<dbReference type="Pfam" id="PF17961">
    <property type="entry name" value="Big_8"/>
    <property type="match status" value="1"/>
</dbReference>
<dbReference type="Pfam" id="PF00746">
    <property type="entry name" value="Gram_pos_anchor"/>
    <property type="match status" value="1"/>
</dbReference>
<dbReference type="Pfam" id="PF17210">
    <property type="entry name" value="SdrD_B"/>
    <property type="match status" value="2"/>
</dbReference>
<dbReference type="Pfam" id="PF10425">
    <property type="entry name" value="SdrG_C_C"/>
    <property type="match status" value="1"/>
</dbReference>
<dbReference type="Pfam" id="PF04650">
    <property type="entry name" value="YSIRK_signal"/>
    <property type="match status" value="1"/>
</dbReference>
<dbReference type="SUPFAM" id="SSF49401">
    <property type="entry name" value="Bacterial adhesins"/>
    <property type="match status" value="2"/>
</dbReference>
<dbReference type="SUPFAM" id="SSF117074">
    <property type="entry name" value="Hypothetical protein PA1324"/>
    <property type="match status" value="2"/>
</dbReference>
<dbReference type="PROSITE" id="PS50847">
    <property type="entry name" value="GRAM_POS_ANCHORING"/>
    <property type="match status" value="1"/>
</dbReference>
<reference key="1">
    <citation type="journal article" date="2001" name="Lancet">
        <title>Whole genome sequencing of meticillin-resistant Staphylococcus aureus.</title>
        <authorList>
            <person name="Kuroda M."/>
            <person name="Ohta T."/>
            <person name="Uchiyama I."/>
            <person name="Baba T."/>
            <person name="Yuzawa H."/>
            <person name="Kobayashi I."/>
            <person name="Cui L."/>
            <person name="Oguchi A."/>
            <person name="Aoki K."/>
            <person name="Nagai Y."/>
            <person name="Lian J.-Q."/>
            <person name="Ito T."/>
            <person name="Kanamori M."/>
            <person name="Matsumaru H."/>
            <person name="Maruyama A."/>
            <person name="Murakami H."/>
            <person name="Hosoyama A."/>
            <person name="Mizutani-Ui Y."/>
            <person name="Takahashi N.K."/>
            <person name="Sawano T."/>
            <person name="Inoue R."/>
            <person name="Kaito C."/>
            <person name="Sekimizu K."/>
            <person name="Hirakawa H."/>
            <person name="Kuhara S."/>
            <person name="Goto S."/>
            <person name="Yabuzaki J."/>
            <person name="Kanehisa M."/>
            <person name="Yamashita A."/>
            <person name="Oshima K."/>
            <person name="Furuya K."/>
            <person name="Yoshino C."/>
            <person name="Shiba T."/>
            <person name="Hattori M."/>
            <person name="Ogasawara N."/>
            <person name="Hayashi H."/>
            <person name="Hiramatsu K."/>
        </authorList>
    </citation>
    <scope>NUCLEOTIDE SEQUENCE [LARGE SCALE GENOMIC DNA]</scope>
    <source>
        <strain>Mu50 / ATCC 700699</strain>
    </source>
</reference>
<keyword id="KW-0106">Calcium</keyword>
<keyword id="KW-0134">Cell wall</keyword>
<keyword id="KW-0572">Peptidoglycan-anchor</keyword>
<keyword id="KW-0677">Repeat</keyword>
<keyword id="KW-0964">Secreted</keyword>
<keyword id="KW-0732">Signal</keyword>
<organism>
    <name type="scientific">Staphylococcus aureus (strain Mu50 / ATCC 700699)</name>
    <dbReference type="NCBI Taxonomy" id="158878"/>
    <lineage>
        <taxon>Bacteria</taxon>
        <taxon>Bacillati</taxon>
        <taxon>Bacillota</taxon>
        <taxon>Bacilli</taxon>
        <taxon>Bacillales</taxon>
        <taxon>Staphylococcaceae</taxon>
        <taxon>Staphylococcus</taxon>
    </lineage>
</organism>
<comment type="function">
    <text evidence="1">Cell surface-associated calcium-binding protein which plays an important role in adhesion and pathogenesis. Mediates interactions with components of the extracellular matrix such as host NRXN1 to promote bacterial adhesion.</text>
</comment>
<comment type="subunit">
    <text evidence="1">Homodimerizes; via N2-Domain. Interacts with host NRXN1; this interaction mediates bacterial attachment to host cells.</text>
</comment>
<comment type="subcellular location">
    <subcellularLocation>
        <location evidence="3">Secreted</location>
        <location evidence="3">Cell wall</location>
        <topology evidence="3">Peptidoglycan-anchor</topology>
    </subcellularLocation>
</comment>
<comment type="similarity">
    <text evidence="5">Belongs to the serine-aspartate repeat-containing protein (SDr) family.</text>
</comment>
<proteinExistence type="inferred from homology"/>
<gene>
    <name type="primary">sdrC</name>
    <name type="ordered locus">SAV0561</name>
</gene>
<sequence length="953" mass="103293">MNNKKTATNRKGMIPNRLNKFSIRKYSVGTASILVGTTLIFGLSGHEAKAAEHTNGELNQSKNETTAPSENKTTEKVDSRQLKDNTQTATADQPKVTMSDSATVKETSSNMQSPQNATASQSTTQTSNVTTNDKSSTTYSNETDKSNLTQAKNVSTTPKTTTIKQRALNRMAVNTVAAPQQGTNVNDKVHFTNIDIAIDKGHVNKTTGNTEFWATSSDVLKLKANYTIDDSVKEGDTFTFKYGQYFRPGSVRLPSQTQNLYNAQGNIIAKGIYDSKTNTTTYTFTNYVDQYTNVSGSFEQVAFAKRENATTDKTAYKMEVTLGNDTYSKDVIVDYGNQKGQQLISSTNYINNEDLSRNMTVYVNQPKKTYTKETFVTNLTGYKFNPDAKNFKIYEVTDQNQFVDSFTPDTSKLKDVTGQFDVIYSNDNKTATVDLLNGQSSSDKQYIIQQVAYPDNSSTDNGKIDYTLETQNGKSSWSNSYSNVNGSSTANGDQKKYNLGDYVWEDTNKDGKQDANEKGIKGVYVILKDSNGKELDRTTTDENGKYQFTGLSNGTYSVEFSTPAGYTPTTANAGTDDAVDSDGLTTTGVIKDADNMTLDSGFYKTPKYSLGDYVWYDSNKDGKQDSTEKGIKGVKVTLQNEKGEVIGTTETDENGKYRFDNLDSGKYKVIFEKPAGLTQTGTNTTEDDKDADGGEVDVTITDHDDFTLDNGYYEEETSDSDSDSDSDSDSDSDSDSDSDSDSDSDSDSDSDSDSDSDSDSDSDSDSDSDSDSESDSDSDSDSDSDSDSDSDSDSDSDSDSDSDSDSDSDSDSDSDSDSDSDSDNDSDSDSDSDSDSDSDSDSDSDSDSDSDSDSDSDSDSDSDSDSDSDSDSDSDSDSDSDSDSDSDSDSDSDAGKHTPTKPMSTVKDQHKTAKALPETGSENNNSNNGTLFGGLFAALGSLLLFGRRKKQNK</sequence>
<accession>Q99W48</accession>
<name>SDRC_STAAM</name>
<feature type="signal peptide" evidence="2">
    <location>
        <begin position="1"/>
        <end position="50"/>
    </location>
</feature>
<feature type="chain" id="PRO_0000281392" description="Serine-aspartate repeat-containing protein C">
    <location>
        <begin position="51"/>
        <end position="919"/>
    </location>
</feature>
<feature type="propeptide" id="PRO_0000281393" description="Removed by sortase" evidence="3">
    <location>
        <begin position="920"/>
        <end position="953"/>
    </location>
</feature>
<feature type="domain" description="CNA-B 1">
    <location>
        <begin position="496"/>
        <end position="606"/>
    </location>
</feature>
<feature type="domain" description="CNA-B 2">
    <location>
        <begin position="607"/>
        <end position="717"/>
    </location>
</feature>
<feature type="region of interest" description="Ligand binding A region">
    <location>
        <begin position="51"/>
        <end position="495"/>
    </location>
</feature>
<feature type="region of interest" description="Disordered" evidence="4">
    <location>
        <begin position="51"/>
        <end position="160"/>
    </location>
</feature>
<feature type="region of interest" description="Disordered" evidence="4">
    <location>
        <begin position="678"/>
        <end position="933"/>
    </location>
</feature>
<feature type="short sequence motif" description="LPXTG sorting signal" evidence="3">
    <location>
        <begin position="916"/>
        <end position="920"/>
    </location>
</feature>
<feature type="compositionally biased region" description="Polar residues" evidence="4">
    <location>
        <begin position="56"/>
        <end position="71"/>
    </location>
</feature>
<feature type="compositionally biased region" description="Basic and acidic residues" evidence="4">
    <location>
        <begin position="72"/>
        <end position="83"/>
    </location>
</feature>
<feature type="compositionally biased region" description="Polar residues" evidence="4">
    <location>
        <begin position="84"/>
        <end position="114"/>
    </location>
</feature>
<feature type="compositionally biased region" description="Low complexity" evidence="4">
    <location>
        <begin position="115"/>
        <end position="132"/>
    </location>
</feature>
<feature type="compositionally biased region" description="Polar residues" evidence="4">
    <location>
        <begin position="133"/>
        <end position="160"/>
    </location>
</feature>
<feature type="compositionally biased region" description="Acidic residues" evidence="4">
    <location>
        <begin position="685"/>
        <end position="695"/>
    </location>
</feature>
<feature type="compositionally biased region" description="Acidic residues" evidence="4">
    <location>
        <begin position="712"/>
        <end position="892"/>
    </location>
</feature>
<feature type="compositionally biased region" description="Low complexity" evidence="4">
    <location>
        <begin position="918"/>
        <end position="933"/>
    </location>
</feature>
<feature type="modified residue" description="Pentaglycyl murein peptidoglycan amidated threonine" evidence="3">
    <location>
        <position position="919"/>
    </location>
</feature>